<protein>
    <recommendedName>
        <fullName evidence="1">ATP-dependent dethiobiotin synthetase BioD</fullName>
        <ecNumber evidence="1">6.3.3.3</ecNumber>
    </recommendedName>
    <alternativeName>
        <fullName evidence="1">DTB synthetase</fullName>
        <shortName evidence="1">DTBS</shortName>
    </alternativeName>
    <alternativeName>
        <fullName evidence="1">Dethiobiotin synthase</fullName>
    </alternativeName>
</protein>
<feature type="chain" id="PRO_0000187966" description="ATP-dependent dethiobiotin synthetase BioD">
    <location>
        <begin position="1"/>
        <end position="219"/>
    </location>
</feature>
<feature type="active site" evidence="1">
    <location>
        <position position="37"/>
    </location>
</feature>
<feature type="binding site" evidence="1">
    <location>
        <begin position="14"/>
        <end position="19"/>
    </location>
    <ligand>
        <name>ATP</name>
        <dbReference type="ChEBI" id="CHEBI:30616"/>
    </ligand>
</feature>
<feature type="binding site" evidence="1">
    <location>
        <position position="18"/>
    </location>
    <ligand>
        <name>Mg(2+)</name>
        <dbReference type="ChEBI" id="CHEBI:18420"/>
    </ligand>
</feature>
<feature type="binding site" evidence="1">
    <location>
        <position position="41"/>
    </location>
    <ligand>
        <name>substrate</name>
    </ligand>
</feature>
<feature type="binding site" evidence="1">
    <location>
        <position position="54"/>
    </location>
    <ligand>
        <name>ATP</name>
        <dbReference type="ChEBI" id="CHEBI:30616"/>
    </ligand>
</feature>
<feature type="binding site" evidence="1">
    <location>
        <position position="54"/>
    </location>
    <ligand>
        <name>Mg(2+)</name>
        <dbReference type="ChEBI" id="CHEBI:18420"/>
    </ligand>
</feature>
<feature type="binding site" evidence="1">
    <location>
        <begin position="114"/>
        <end position="117"/>
    </location>
    <ligand>
        <name>ATP</name>
        <dbReference type="ChEBI" id="CHEBI:30616"/>
    </ligand>
</feature>
<feature type="binding site" evidence="1">
    <location>
        <position position="114"/>
    </location>
    <ligand>
        <name>Mg(2+)</name>
        <dbReference type="ChEBI" id="CHEBI:18420"/>
    </ligand>
</feature>
<feature type="binding site" evidence="1">
    <location>
        <begin position="175"/>
        <end position="176"/>
    </location>
    <ligand>
        <name>ATP</name>
        <dbReference type="ChEBI" id="CHEBI:30616"/>
    </ligand>
</feature>
<reference key="1">
    <citation type="journal article" date="2002" name="J. Bacteriol.">
        <title>Genome sequence and analysis of the oral bacterium Fusobacterium nucleatum strain ATCC 25586.</title>
        <authorList>
            <person name="Kapatral V."/>
            <person name="Anderson I."/>
            <person name="Ivanova N."/>
            <person name="Reznik G."/>
            <person name="Los T."/>
            <person name="Lykidis A."/>
            <person name="Bhattacharyya A."/>
            <person name="Bartman A."/>
            <person name="Gardner W."/>
            <person name="Grechkin G."/>
            <person name="Zhu L."/>
            <person name="Vasieva O."/>
            <person name="Chu L."/>
            <person name="Kogan Y."/>
            <person name="Chaga O."/>
            <person name="Goltsman E."/>
            <person name="Bernal A."/>
            <person name="Larsen N."/>
            <person name="D'Souza M."/>
            <person name="Walunas T."/>
            <person name="Pusch G."/>
            <person name="Haselkorn R."/>
            <person name="Fonstein M."/>
            <person name="Kyrpides N.C."/>
            <person name="Overbeek R."/>
        </authorList>
    </citation>
    <scope>NUCLEOTIDE SEQUENCE [LARGE SCALE GENOMIC DNA]</scope>
    <source>
        <strain>ATCC 25586 / DSM 15643 / BCRC 10681 / CIP 101130 / JCM 8532 / KCTC 2640 / LMG 13131 / VPI 4355</strain>
    </source>
</reference>
<organism>
    <name type="scientific">Fusobacterium nucleatum subsp. nucleatum (strain ATCC 25586 / DSM 15643 / BCRC 10681 / CIP 101130 / JCM 8532 / KCTC 2640 / LMG 13131 / VPI 4355)</name>
    <dbReference type="NCBI Taxonomy" id="190304"/>
    <lineage>
        <taxon>Bacteria</taxon>
        <taxon>Fusobacteriati</taxon>
        <taxon>Fusobacteriota</taxon>
        <taxon>Fusobacteriia</taxon>
        <taxon>Fusobacteriales</taxon>
        <taxon>Fusobacteriaceae</taxon>
        <taxon>Fusobacterium</taxon>
    </lineage>
</organism>
<keyword id="KW-0067">ATP-binding</keyword>
<keyword id="KW-0093">Biotin biosynthesis</keyword>
<keyword id="KW-0963">Cytoplasm</keyword>
<keyword id="KW-0436">Ligase</keyword>
<keyword id="KW-0460">Magnesium</keyword>
<keyword id="KW-0479">Metal-binding</keyword>
<keyword id="KW-0547">Nucleotide-binding</keyword>
<keyword id="KW-1185">Reference proteome</keyword>
<name>BIOD_FUSNN</name>
<accession>Q8RET9</accession>
<gene>
    <name evidence="1" type="primary">bioD</name>
    <name type="ordered locus">FN1001</name>
</gene>
<sequence length="219" mass="25149">MKFKDFFVIGTDTDVGKTYVSTLLYKALKKYNFQYYKPIQSGCFLKDGKLTAPDVDFLTKFVGIDYDDSMVTYTLKEEVSPHLASEMEGIRIEIENVKRHYEDLKKKHSNILVEGAGGLYVPLIRDIFYIYDLIKLFNLPVVLVCGTKVGAINHTMLTLNALDTMGIKLHGLVFNNYRGQFFEDDNIKVVLALSKIKNYLIIKNGQKEISDKEIEKFFN</sequence>
<proteinExistence type="inferred from homology"/>
<evidence type="ECO:0000255" key="1">
    <source>
        <dbReference type="HAMAP-Rule" id="MF_00336"/>
    </source>
</evidence>
<dbReference type="EC" id="6.3.3.3" evidence="1"/>
<dbReference type="EMBL" id="AE009951">
    <property type="protein sequence ID" value="AAL95197.1"/>
    <property type="molecule type" value="Genomic_DNA"/>
</dbReference>
<dbReference type="RefSeq" id="NP_603898.1">
    <property type="nucleotide sequence ID" value="NC_003454.1"/>
</dbReference>
<dbReference type="RefSeq" id="WP_011016822.1">
    <property type="nucleotide sequence ID" value="NZ_OZ209243.1"/>
</dbReference>
<dbReference type="SMR" id="Q8RET9"/>
<dbReference type="FunCoup" id="Q8RET9">
    <property type="interactions" value="163"/>
</dbReference>
<dbReference type="STRING" id="190304.FN1001"/>
<dbReference type="PaxDb" id="190304-FN1001"/>
<dbReference type="EnsemblBacteria" id="AAL95197">
    <property type="protein sequence ID" value="AAL95197"/>
    <property type="gene ID" value="FN1001"/>
</dbReference>
<dbReference type="GeneID" id="79783984"/>
<dbReference type="KEGG" id="fnu:FN1001"/>
<dbReference type="PATRIC" id="fig|190304.8.peg.1566"/>
<dbReference type="eggNOG" id="COG0132">
    <property type="taxonomic scope" value="Bacteria"/>
</dbReference>
<dbReference type="HOGENOM" id="CLU_072551_3_0_0"/>
<dbReference type="InParanoid" id="Q8RET9"/>
<dbReference type="BioCyc" id="FNUC190304:G1FZS-1583-MONOMER"/>
<dbReference type="UniPathway" id="UPA00078">
    <property type="reaction ID" value="UER00161"/>
</dbReference>
<dbReference type="Proteomes" id="UP000002521">
    <property type="component" value="Chromosome"/>
</dbReference>
<dbReference type="GO" id="GO:0005829">
    <property type="term" value="C:cytosol"/>
    <property type="evidence" value="ECO:0000318"/>
    <property type="project" value="GO_Central"/>
</dbReference>
<dbReference type="GO" id="GO:0005524">
    <property type="term" value="F:ATP binding"/>
    <property type="evidence" value="ECO:0007669"/>
    <property type="project" value="UniProtKB-UniRule"/>
</dbReference>
<dbReference type="GO" id="GO:0004141">
    <property type="term" value="F:dethiobiotin synthase activity"/>
    <property type="evidence" value="ECO:0000318"/>
    <property type="project" value="GO_Central"/>
</dbReference>
<dbReference type="GO" id="GO:0000287">
    <property type="term" value="F:magnesium ion binding"/>
    <property type="evidence" value="ECO:0007669"/>
    <property type="project" value="UniProtKB-UniRule"/>
</dbReference>
<dbReference type="GO" id="GO:0009102">
    <property type="term" value="P:biotin biosynthetic process"/>
    <property type="evidence" value="ECO:0000318"/>
    <property type="project" value="GO_Central"/>
</dbReference>
<dbReference type="CDD" id="cd03109">
    <property type="entry name" value="DTBS"/>
    <property type="match status" value="1"/>
</dbReference>
<dbReference type="FunFam" id="3.40.50.300:FF:000292">
    <property type="entry name" value="ATP-dependent dethiobiotin synthetase BioD"/>
    <property type="match status" value="1"/>
</dbReference>
<dbReference type="Gene3D" id="3.40.50.300">
    <property type="entry name" value="P-loop containing nucleotide triphosphate hydrolases"/>
    <property type="match status" value="1"/>
</dbReference>
<dbReference type="HAMAP" id="MF_00336">
    <property type="entry name" value="BioD"/>
    <property type="match status" value="1"/>
</dbReference>
<dbReference type="InterPro" id="IPR004472">
    <property type="entry name" value="DTB_synth_BioD"/>
</dbReference>
<dbReference type="InterPro" id="IPR027417">
    <property type="entry name" value="P-loop_NTPase"/>
</dbReference>
<dbReference type="NCBIfam" id="TIGR00347">
    <property type="entry name" value="bioD"/>
    <property type="match status" value="1"/>
</dbReference>
<dbReference type="PANTHER" id="PTHR43210:SF2">
    <property type="entry name" value="ATP-DEPENDENT DETHIOBIOTIN SYNTHETASE BIOD 2"/>
    <property type="match status" value="1"/>
</dbReference>
<dbReference type="PANTHER" id="PTHR43210">
    <property type="entry name" value="DETHIOBIOTIN SYNTHETASE"/>
    <property type="match status" value="1"/>
</dbReference>
<dbReference type="Pfam" id="PF13500">
    <property type="entry name" value="AAA_26"/>
    <property type="match status" value="1"/>
</dbReference>
<dbReference type="PIRSF" id="PIRSF006755">
    <property type="entry name" value="DTB_synth"/>
    <property type="match status" value="1"/>
</dbReference>
<dbReference type="SUPFAM" id="SSF52540">
    <property type="entry name" value="P-loop containing nucleoside triphosphate hydrolases"/>
    <property type="match status" value="1"/>
</dbReference>
<comment type="function">
    <text evidence="1">Catalyzes a mechanistically unusual reaction, the ATP-dependent insertion of CO2 between the N7 and N8 nitrogen atoms of 7,8-diaminopelargonic acid (DAPA, also called 7,8-diammoniononanoate) to form a ureido ring.</text>
</comment>
<comment type="catalytic activity">
    <reaction evidence="1">
        <text>(7R,8S)-7,8-diammoniononanoate + CO2 + ATP = (4R,5S)-dethiobiotin + ADP + phosphate + 3 H(+)</text>
        <dbReference type="Rhea" id="RHEA:15805"/>
        <dbReference type="ChEBI" id="CHEBI:15378"/>
        <dbReference type="ChEBI" id="CHEBI:16526"/>
        <dbReference type="ChEBI" id="CHEBI:30616"/>
        <dbReference type="ChEBI" id="CHEBI:43474"/>
        <dbReference type="ChEBI" id="CHEBI:149469"/>
        <dbReference type="ChEBI" id="CHEBI:149473"/>
        <dbReference type="ChEBI" id="CHEBI:456216"/>
        <dbReference type="EC" id="6.3.3.3"/>
    </reaction>
</comment>
<comment type="cofactor">
    <cofactor evidence="1">
        <name>Mg(2+)</name>
        <dbReference type="ChEBI" id="CHEBI:18420"/>
    </cofactor>
</comment>
<comment type="pathway">
    <text evidence="1">Cofactor biosynthesis; biotin biosynthesis; biotin from 7,8-diaminononanoate: step 1/2.</text>
</comment>
<comment type="subunit">
    <text evidence="1">Homodimer.</text>
</comment>
<comment type="subcellular location">
    <subcellularLocation>
        <location evidence="1">Cytoplasm</location>
    </subcellularLocation>
</comment>
<comment type="similarity">
    <text evidence="1">Belongs to the dethiobiotin synthetase family.</text>
</comment>